<gene>
    <name type="primary">vps10</name>
    <name type="ORF">SJAG_01488</name>
</gene>
<organism>
    <name type="scientific">Schizosaccharomyces japonicus (strain yFS275 / FY16936)</name>
    <name type="common">Fission yeast</name>
    <dbReference type="NCBI Taxonomy" id="402676"/>
    <lineage>
        <taxon>Eukaryota</taxon>
        <taxon>Fungi</taxon>
        <taxon>Dikarya</taxon>
        <taxon>Ascomycota</taxon>
        <taxon>Taphrinomycotina</taxon>
        <taxon>Schizosaccharomycetes</taxon>
        <taxon>Schizosaccharomycetales</taxon>
        <taxon>Schizosaccharomycetaceae</taxon>
        <taxon>Schizosaccharomyces</taxon>
    </lineage>
</organism>
<name>VPS10_SCHJY</name>
<dbReference type="EMBL" id="KE651168">
    <property type="protein sequence ID" value="EEB06447.1"/>
    <property type="molecule type" value="Genomic_DNA"/>
</dbReference>
<dbReference type="RefSeq" id="XP_002172740.1">
    <property type="nucleotide sequence ID" value="XM_002172704.2"/>
</dbReference>
<dbReference type="SMR" id="B6JY29"/>
<dbReference type="STRING" id="402676.B6JY29"/>
<dbReference type="GlyCosmos" id="B6JY29">
    <property type="glycosylation" value="5 sites, No reported glycans"/>
</dbReference>
<dbReference type="EnsemblFungi" id="EEB06447">
    <property type="protein sequence ID" value="EEB06447"/>
    <property type="gene ID" value="SJAG_01488"/>
</dbReference>
<dbReference type="GeneID" id="7051446"/>
<dbReference type="JaponicusDB" id="SJAG_01488">
    <property type="gene designation" value="vps10"/>
</dbReference>
<dbReference type="VEuPathDB" id="FungiDB:SJAG_01488"/>
<dbReference type="eggNOG" id="KOG3511">
    <property type="taxonomic scope" value="Eukaryota"/>
</dbReference>
<dbReference type="HOGENOM" id="CLU_000700_0_0_1"/>
<dbReference type="OMA" id="ATMSEFI"/>
<dbReference type="OrthoDB" id="443634at2759"/>
<dbReference type="Proteomes" id="UP000001744">
    <property type="component" value="Unassembled WGS sequence"/>
</dbReference>
<dbReference type="GO" id="GO:0005829">
    <property type="term" value="C:cytosol"/>
    <property type="evidence" value="ECO:0007669"/>
    <property type="project" value="GOC"/>
</dbReference>
<dbReference type="GO" id="GO:0005794">
    <property type="term" value="C:Golgi apparatus"/>
    <property type="evidence" value="ECO:0000318"/>
    <property type="project" value="GO_Central"/>
</dbReference>
<dbReference type="GO" id="GO:0005770">
    <property type="term" value="C:late endosome"/>
    <property type="evidence" value="ECO:0007669"/>
    <property type="project" value="EnsemblFungi"/>
</dbReference>
<dbReference type="GO" id="GO:0016020">
    <property type="term" value="C:membrane"/>
    <property type="evidence" value="ECO:0000318"/>
    <property type="project" value="GO_Central"/>
</dbReference>
<dbReference type="GO" id="GO:0005802">
    <property type="term" value="C:trans-Golgi network"/>
    <property type="evidence" value="ECO:0007669"/>
    <property type="project" value="EnsemblFungi"/>
</dbReference>
<dbReference type="GO" id="GO:0006895">
    <property type="term" value="P:Golgi to endosome transport"/>
    <property type="evidence" value="ECO:0000318"/>
    <property type="project" value="GO_Central"/>
</dbReference>
<dbReference type="GO" id="GO:0006896">
    <property type="term" value="P:Golgi to vacuole transport"/>
    <property type="evidence" value="ECO:0000318"/>
    <property type="project" value="GO_Central"/>
</dbReference>
<dbReference type="GO" id="GO:0006623">
    <property type="term" value="P:protein targeting to vacuole"/>
    <property type="evidence" value="ECO:0000318"/>
    <property type="project" value="GO_Central"/>
</dbReference>
<dbReference type="FunFam" id="3.30.60.270:FF:000005">
    <property type="entry name" value="Sortilin"/>
    <property type="match status" value="1"/>
</dbReference>
<dbReference type="Gene3D" id="2.10.70.80">
    <property type="match status" value="2"/>
</dbReference>
<dbReference type="Gene3D" id="3.30.60.270">
    <property type="match status" value="1"/>
</dbReference>
<dbReference type="Gene3D" id="2.130.10.10">
    <property type="entry name" value="YVTN repeat-like/Quinoprotein amine dehydrogenase"/>
    <property type="match status" value="1"/>
</dbReference>
<dbReference type="InterPro" id="IPR031777">
    <property type="entry name" value="Sortilin_C"/>
</dbReference>
<dbReference type="InterPro" id="IPR031778">
    <property type="entry name" value="Sortilin_N"/>
</dbReference>
<dbReference type="InterPro" id="IPR006581">
    <property type="entry name" value="VPS10"/>
</dbReference>
<dbReference type="InterPro" id="IPR050310">
    <property type="entry name" value="VPS10-sortilin"/>
</dbReference>
<dbReference type="InterPro" id="IPR015943">
    <property type="entry name" value="WD40/YVTN_repeat-like_dom_sf"/>
</dbReference>
<dbReference type="PANTHER" id="PTHR12106">
    <property type="entry name" value="SORTILIN RELATED"/>
    <property type="match status" value="1"/>
</dbReference>
<dbReference type="PANTHER" id="PTHR12106:SF27">
    <property type="entry name" value="SORTILIN-RELATED RECEPTOR"/>
    <property type="match status" value="1"/>
</dbReference>
<dbReference type="Pfam" id="PF15902">
    <property type="entry name" value="Sortilin-Vps10"/>
    <property type="match status" value="2"/>
</dbReference>
<dbReference type="Pfam" id="PF15901">
    <property type="entry name" value="Sortilin_C"/>
    <property type="match status" value="2"/>
</dbReference>
<dbReference type="SMART" id="SM00602">
    <property type="entry name" value="VPS10"/>
    <property type="match status" value="2"/>
</dbReference>
<dbReference type="SUPFAM" id="SSF110296">
    <property type="entry name" value="Oligoxyloglucan reducing end-specific cellobiohydrolase"/>
    <property type="match status" value="2"/>
</dbReference>
<proteinExistence type="inferred from homology"/>
<accession>B6JY29</accession>
<sequence>MLHHCVLHIICALFFFLPLGGADSNYAISKLGTASKSQKSLIVNFSKSRNILLLDATGTLLLSQDDGTSWQDAVSNSDPAVVEQLYQHPFEDDIVYAITKESDILVSEDAGLTWFTVTMPPKTVIEAQPFEFNARQSQSVILNAARCESGSIWTGVTCYPFTYYTYDNFRNLDSVHDSIVSCTFAVGTVEFAGQDEDQMLCLIRENDVDLQAPFNQQLISVSKGFESIDYVVFDPYYGSLGTESVVAVGQYLVAAVVDVNSKKLKLHYSTDGQIWVPITFINAPSIGSLTVTRSTSLTLGVDVESTNLKNPVGEFYTISPSDAYAVRRLNDTNRDTRGYVDVIELDYLNNTILANTVANTEDLYKRASRQKELVTKISHDGGFSWTQLERPVDLECEGDDAEDCHLHLHLGITETKFGSLSPDRLPGVIMALGSVGTHLQPLSDSDLFISEDAGRSWYLSLQGPHYYSSSAYGSVFVAVKANENSKLIYYSLDFGREWESLEVEASFRALEIIPPKSLDSLTFLIRAKVKKEESFIAIDFSSILSRECTFDEKKVANGDFELWYPFVMDDTPQCLMGRIEYYLRKKRAVSCVVRNEVPVHSFVEQICTCESKDYECSTYFEPSDHFTCEVNPESLDPLCRVDPDATLQLKPYRILLGNSCVPKKKEEKEKSISMKCPKLDHRKDIHMYHHKIQDTISNIVYMEGTGEPDSTTELLLTSSQKVLFSYDFGEEWLEFDEKKNPSFYGIYPHAFLKDTAFLLTKDRKIYFTNNKGRSFYRLDAPSPPNVVGYPVFNFHSLHPNWVMYMGSENCDDSFYEDCRSVVYLSFDSGASWQKLPDELEYCSWVLGERLLVEDKLLFCNRRRAAADSIGYDLVASTDFFETEASSIRENVLGFLLADEYVVIAALTDDETSLSMHVSVNGRNFSPCIFPQNIQVHSQQAYTILSSKTRALFIHVTLSSRKGAEWGSVLKSNSNGTYFVNVLDKVNRNELGYVDFEKVEGLESIALANVVLNSDEAFNGEEKRLGTLITFNDGIDWERLYLIDAKKHYPHCDSKCSLHFHGFTERSVFSDPTSSSAATGIIFGIGSYSYYLEPYETSQTFISRDGGVHWELIFDSPHQWAFVDSGSLLVAVPSTNKTNILYYSEDEGRSWIAYQFAEDTYLIEDLSTAPSGNSQRILVLAKGKKSSETISFTVDFSHLRSRVCVFDFNDQRDFASWTPAGRDGKPMCLFGHKTAFYRRKPGRDCFIGNTPYVSDTIISNCQCTRMDYECNYNYERIAGGTCRLVSGAEPPLQQEEQCAAEGAIEWMEPTAYKRIPLTTCEGGLVLDESTTHPCPGKEDDYHKIHPGTPVWLIIMLVLLSVFLSTIVGAWVYTKAQSYLVGAIRLGEDPADETVFAKLMTRIESVVTAVPIFFSAAYHLVRSVFVRQDRSMSLDDYDNFEGMEDAAFLEVDDIETSE</sequence>
<reference key="1">
    <citation type="journal article" date="2011" name="Science">
        <title>Comparative functional genomics of the fission yeasts.</title>
        <authorList>
            <person name="Rhind N."/>
            <person name="Chen Z."/>
            <person name="Yassour M."/>
            <person name="Thompson D.A."/>
            <person name="Haas B.J."/>
            <person name="Habib N."/>
            <person name="Wapinski I."/>
            <person name="Roy S."/>
            <person name="Lin M.F."/>
            <person name="Heiman D.I."/>
            <person name="Young S.K."/>
            <person name="Furuya K."/>
            <person name="Guo Y."/>
            <person name="Pidoux A."/>
            <person name="Chen H.M."/>
            <person name="Robbertse B."/>
            <person name="Goldberg J.M."/>
            <person name="Aoki K."/>
            <person name="Bayne E.H."/>
            <person name="Berlin A.M."/>
            <person name="Desjardins C.A."/>
            <person name="Dobbs E."/>
            <person name="Dukaj L."/>
            <person name="Fan L."/>
            <person name="FitzGerald M.G."/>
            <person name="French C."/>
            <person name="Gujja S."/>
            <person name="Hansen K."/>
            <person name="Keifenheim D."/>
            <person name="Levin J.Z."/>
            <person name="Mosher R.A."/>
            <person name="Mueller C.A."/>
            <person name="Pfiffner J."/>
            <person name="Priest M."/>
            <person name="Russ C."/>
            <person name="Smialowska A."/>
            <person name="Swoboda P."/>
            <person name="Sykes S.M."/>
            <person name="Vaughn M."/>
            <person name="Vengrova S."/>
            <person name="Yoder R."/>
            <person name="Zeng Q."/>
            <person name="Allshire R."/>
            <person name="Baulcombe D."/>
            <person name="Birren B.W."/>
            <person name="Brown W."/>
            <person name="Ekwall K."/>
            <person name="Kellis M."/>
            <person name="Leatherwood J."/>
            <person name="Levin H."/>
            <person name="Margalit H."/>
            <person name="Martienssen R."/>
            <person name="Nieduszynski C.A."/>
            <person name="Spatafora J.W."/>
            <person name="Friedman N."/>
            <person name="Dalgaard J.Z."/>
            <person name="Baumann P."/>
            <person name="Niki H."/>
            <person name="Regev A."/>
            <person name="Nusbaum C."/>
        </authorList>
    </citation>
    <scope>NUCLEOTIDE SEQUENCE [LARGE SCALE GENOMIC DNA]</scope>
    <source>
        <strain>yFS275 / FY16936</strain>
    </source>
</reference>
<evidence type="ECO:0000250" key="1"/>
<evidence type="ECO:0000255" key="2"/>
<evidence type="ECO:0000305" key="3"/>
<feature type="signal peptide" evidence="2">
    <location>
        <begin position="1"/>
        <end position="22"/>
    </location>
</feature>
<feature type="chain" id="PRO_0000407535" description="Vacuolar protein sorting/targeting protein 10">
    <location>
        <begin position="23"/>
        <end position="1456"/>
    </location>
</feature>
<feature type="topological domain" description="Lumenal" evidence="2">
    <location>
        <begin position="23"/>
        <end position="1348"/>
    </location>
</feature>
<feature type="transmembrane region" description="Helical" evidence="2">
    <location>
        <begin position="1349"/>
        <end position="1369"/>
    </location>
</feature>
<feature type="topological domain" description="Cytoplasmic" evidence="2">
    <location>
        <begin position="1370"/>
        <end position="1456"/>
    </location>
</feature>
<feature type="repeat" description="BNR 1">
    <location>
        <begin position="62"/>
        <end position="71"/>
    </location>
</feature>
<feature type="repeat" description="BNR 2">
    <location>
        <begin position="106"/>
        <end position="114"/>
    </location>
</feature>
<feature type="repeat" description="BNR 3">
    <location>
        <begin position="448"/>
        <end position="458"/>
    </location>
</feature>
<feature type="repeat" description="BNR 4">
    <location>
        <begin position="489"/>
        <end position="499"/>
    </location>
</feature>
<feature type="repeat" description="BNR 5">
    <location>
        <begin position="823"/>
        <end position="834"/>
    </location>
</feature>
<feature type="repeat" description="BNR 6">
    <location>
        <begin position="1100"/>
        <end position="1110"/>
    </location>
</feature>
<feature type="repeat" description="BNR 7">
    <location>
        <begin position="1141"/>
        <end position="1150"/>
    </location>
</feature>
<feature type="glycosylation site" description="N-linked (GlcNAc...) asparagine" evidence="2">
    <location>
        <position position="44"/>
    </location>
</feature>
<feature type="glycosylation site" description="N-linked (GlcNAc...) asparagine" evidence="2">
    <location>
        <position position="330"/>
    </location>
</feature>
<feature type="glycosylation site" description="N-linked (GlcNAc...) asparagine" evidence="2">
    <location>
        <position position="349"/>
    </location>
</feature>
<feature type="glycosylation site" description="N-linked (GlcNAc...) asparagine" evidence="2">
    <location>
        <position position="974"/>
    </location>
</feature>
<feature type="glycosylation site" description="N-linked (GlcNAc...) asparagine" evidence="2">
    <location>
        <position position="1135"/>
    </location>
</feature>
<protein>
    <recommendedName>
        <fullName>Vacuolar protein sorting/targeting protein 10</fullName>
    </recommendedName>
    <alternativeName>
        <fullName>Carboxypeptidase Y receptor</fullName>
        <shortName>CPY receptor</shortName>
    </alternativeName>
    <alternativeName>
        <fullName>Sortilin vps10</fullName>
    </alternativeName>
    <alternativeName>
        <fullName>Vacuolar carboxypeptidase sorting receptor vps10</fullName>
    </alternativeName>
</protein>
<keyword id="KW-0325">Glycoprotein</keyword>
<keyword id="KW-0333">Golgi apparatus</keyword>
<keyword id="KW-0472">Membrane</keyword>
<keyword id="KW-0653">Protein transport</keyword>
<keyword id="KW-0675">Receptor</keyword>
<keyword id="KW-1185">Reference proteome</keyword>
<keyword id="KW-0677">Repeat</keyword>
<keyword id="KW-0732">Signal</keyword>
<keyword id="KW-0812">Transmembrane</keyword>
<keyword id="KW-1133">Transmembrane helix</keyword>
<keyword id="KW-0813">Transport</keyword>
<comment type="function">
    <text evidence="1">Functions as a sorting receptor in the Golgi compartment required for the intracellular sorting and delivery of soluble vacuolar proteins, like carboxypeptidase Y (CPY) and proteinase A. Executes multiple rounds of sorting by cycling between the late Golgi and a prevacuolar endosome-like compartment (By similarity).</text>
</comment>
<comment type="subcellular location">
    <subcellularLocation>
        <location evidence="1">Golgi apparatus</location>
        <location evidence="1">trans-Golgi network membrane</location>
        <topology evidence="1">Single-pass type I membrane protein</topology>
    </subcellularLocation>
    <subcellularLocation>
        <location evidence="1">Prevacuolar compartment membrane</location>
        <topology evidence="1">Single-pass type I membrane protein</topology>
    </subcellularLocation>
    <text evidence="1">Cycles between the Golgi apparatus and the prevacuolar compartment.</text>
</comment>
<comment type="similarity">
    <text evidence="3">Belongs to the VPS10-related sortilin family.</text>
</comment>